<organism>
    <name type="scientific">Staphylococcus epidermidis</name>
    <dbReference type="NCBI Taxonomy" id="1282"/>
    <lineage>
        <taxon>Bacteria</taxon>
        <taxon>Bacillati</taxon>
        <taxon>Bacillota</taxon>
        <taxon>Bacilli</taxon>
        <taxon>Bacillales</taxon>
        <taxon>Staphylococcaceae</taxon>
        <taxon>Staphylococcus</taxon>
    </lineage>
</organism>
<feature type="propeptide" id="PRO_0000450387" description="Cleaved by ElxP" evidence="3 4">
    <location>
        <begin position="1"/>
        <end position="24"/>
    </location>
</feature>
<feature type="peptide" id="PRO_0000379930" description="Lantibiotic epilancin 15X" evidence="3">
    <location>
        <begin position="25"/>
        <end position="55"/>
    </location>
</feature>
<feature type="modified residue" description="D-lactate; by the dehydratase ElxB and the dehydrogenase ElxO" evidence="3 4">
    <location>
        <position position="25"/>
    </location>
</feature>
<feature type="modified residue" description="2,3-didehydroalanine (Ser); by the dehydratase ElxB" evidence="3 8">
    <location>
        <position position="27"/>
    </location>
</feature>
<feature type="modified residue" description="2,3-didehydrobutyrine; by the dehydratase ElxB" evidence="3 8">
    <location>
        <position position="31"/>
    </location>
</feature>
<feature type="modified residue" description="2,3-didehydrobutyrine; by the dehydratase ElxB" evidence="3 8">
    <location>
        <position position="32"/>
    </location>
</feature>
<feature type="modified residue" description="2,3-didehydrobutyrine; by the dehydratase ElxB" evidence="3 8">
    <location>
        <position position="52"/>
    </location>
</feature>
<feature type="cross-link" description="Lanthionine (Ser-Cys); by the dehydratase ElxB and the cyclase ElxC" evidence="3 8">
    <location>
        <begin position="36"/>
        <end position="40"/>
    </location>
</feature>
<feature type="cross-link" description="Beta-methyllanthionine (Thr-Cys); by the dehydratase ElxB and the cyclase ElxC" evidence="3 8">
    <location>
        <begin position="44"/>
        <end position="47"/>
    </location>
</feature>
<feature type="cross-link" description="Beta-methyllanthionine (Thr-Cys); by the dehydratase ElxB and the cyclase ElxC" evidence="3 8">
    <location>
        <begin position="46"/>
        <end position="49"/>
    </location>
</feature>
<feature type="strand" evidence="9">
    <location>
        <begin position="41"/>
        <end position="48"/>
    </location>
</feature>
<accession>P86047</accession>
<accession>I6YXA9</accession>
<keyword id="KW-0002">3D-structure</keyword>
<keyword id="KW-0044">Antibiotic</keyword>
<keyword id="KW-0929">Antimicrobial</keyword>
<keyword id="KW-0078">Bacteriocin</keyword>
<keyword id="KW-0208">D-amino acid</keyword>
<keyword id="KW-0903">Direct protein sequencing</keyword>
<keyword id="KW-0425">Lantibiotic</keyword>
<keyword id="KW-0883">Thioether bond</keyword>
<sequence length="55" mass="6130">MKKELFDLNLNKDIEAQKSDLNPQSASIVKTTIKASKKLCRGFTLTCGCHFTGKK</sequence>
<reference key="1">
    <citation type="journal article" date="2011" name="Chem. Biol.">
        <title>Biosynthesis of the antimicrobial peptide epilancin 15X and its N-terminal lactate.</title>
        <authorList>
            <person name="Velasquez J.E."/>
            <person name="Zhang X."/>
            <person name="van der Donk W.A."/>
        </authorList>
    </citation>
    <scope>NUCLEOTIDE SEQUENCE [GENOMIC DNA]</scope>
    <source>
        <strain>15X154</strain>
    </source>
</reference>
<reference evidence="7" key="2">
    <citation type="journal article" date="2005" name="FEBS Lett.">
        <title>Isolation and structural characterization of epilancin 15X, a novel lantibiotic from a clinical strain of Staphylococcus epidermidis.</title>
        <authorList>
            <person name="Ekkelenkamp M.B."/>
            <person name="Hanssen M."/>
            <person name="Danny Hsu S.-T."/>
            <person name="de Jong A."/>
            <person name="Milatovic D."/>
            <person name="Verhoef J."/>
            <person name="van Nuland N.A.J."/>
        </authorList>
    </citation>
    <scope>PROTEIN SEQUENCE OF 25-55</scope>
    <scope>STRUCTURE BY NMR OF 25-55</scope>
    <scope>MASS SPECTROMETRY</scope>
    <scope>FUNCTION</scope>
    <scope>DEHYDRATION AT SER-27; THR-31; THR-32 AND THR-52</scope>
    <scope>LANTHIONINE AND METHYLLANTHIONINE CROSS-LINKS</scope>
    <source>
        <strain>15X154</strain>
    </source>
</reference>
<proteinExistence type="evidence at protein level"/>
<dbReference type="EMBL" id="JQ979180">
    <property type="protein sequence ID" value="AFN69432.1"/>
    <property type="molecule type" value="Genomic_DNA"/>
</dbReference>
<dbReference type="PDB" id="1W9N">
    <property type="method" value="NMR"/>
    <property type="chains" value="A=25-55"/>
</dbReference>
<dbReference type="PDBsum" id="1W9N"/>
<dbReference type="SMR" id="P86047"/>
<dbReference type="EvolutionaryTrace" id="P86047"/>
<dbReference type="GO" id="GO:0005102">
    <property type="term" value="F:signaling receptor binding"/>
    <property type="evidence" value="ECO:0007669"/>
    <property type="project" value="UniProtKB-KW"/>
</dbReference>
<dbReference type="GO" id="GO:0042742">
    <property type="term" value="P:defense response to bacterium"/>
    <property type="evidence" value="ECO:0007669"/>
    <property type="project" value="UniProtKB-KW"/>
</dbReference>
<dbReference type="GO" id="GO:0031640">
    <property type="term" value="P:killing of cells of another organism"/>
    <property type="evidence" value="ECO:0007669"/>
    <property type="project" value="UniProtKB-KW"/>
</dbReference>
<dbReference type="InterPro" id="IPR012519">
    <property type="entry name" value="Lantibiotic_typ-A_Pep5"/>
</dbReference>
<dbReference type="NCBIfam" id="NF047830">
    <property type="entry name" value="lanti_ElxA"/>
    <property type="match status" value="1"/>
</dbReference>
<dbReference type="Pfam" id="PF08130">
    <property type="entry name" value="Antimicrobial18"/>
    <property type="match status" value="1"/>
</dbReference>
<name>LAN15_STAEP</name>
<protein>
    <recommendedName>
        <fullName evidence="5">Lantibiotic epilancin 15X</fullName>
    </recommendedName>
</protein>
<evidence type="ECO:0000250" key="1">
    <source>
        <dbReference type="UniProtKB" id="Q57312"/>
    </source>
</evidence>
<evidence type="ECO:0000255" key="2"/>
<evidence type="ECO:0000269" key="3">
    <source>
    </source>
</evidence>
<evidence type="ECO:0000269" key="4">
    <source>
    </source>
</evidence>
<evidence type="ECO:0000303" key="5">
    <source>
    </source>
</evidence>
<evidence type="ECO:0000303" key="6">
    <source>
    </source>
</evidence>
<evidence type="ECO:0000305" key="7"/>
<evidence type="ECO:0000305" key="8">
    <source>
    </source>
</evidence>
<evidence type="ECO:0007829" key="9">
    <source>
        <dbReference type="PDB" id="1W9N"/>
    </source>
</evidence>
<comment type="function">
    <text evidence="3">Lanthionine-containing peptide antibiotic (lantibiotic) active on Gram-positive bacteria such as staphylococci, enterococci and streptococci. The bactericidal activity of lantibiotics is based on depolarization of energized bacterial cytoplasmic membranes, initiated by the formation of aqueous transmembrane pores.</text>
</comment>
<comment type="PTM">
    <text evidence="3 8">Maturation of this lantibiotic involves the enzymatic conversion of Thr, and Ser into dehydrated AA by ElxB and the formation of thioether bonds with cysteine by the cyclase ElxC (Probable) (PubMed:15792796). The next steps are cleavage of the leader peptide by ElxP and membrane translocation by ElxT (Probable). The leader peptide may be removed before membrane translocation, in contrast to other lantibiotics for which the cleavage occur after translocation (Probable). This is suggested by the probable cytoplasmic localization of the serine protease ElxP that cleaves the leader peptide (Probable).</text>
</comment>
<comment type="PTM">
    <text evidence="1 4">The N-terminal D-lactate is probably produced by dehydration of Ser-25 by ElxB, followed by proteolytic removal of the leader peptide by the serine protease ElxP and hydrolysis of the resulting new N-terminal dehydroalanine (PubMed:21802007). This hydrolysis may occur spontaneously (By similarity). The pyruvate group thus formed is reduced to D-lactate by the NADPH-dependent oxidoreductase ElxO (PubMed:21802007). This N-terminal D-lactate protects the lantibiotic against degradation against aminopeptidase (PubMed:21802007).</text>
</comment>
<comment type="PTM">
    <text evidence="3">It is not established whether the 2,3-didehydrobutyrines are the E- or Z-isomers.</text>
</comment>
<comment type="mass spectrometry" mass="3172.75" method="Electrospray" evidence="3"/>
<comment type="similarity">
    <text evidence="2">Belongs to the type A lantibiotic family.</text>
</comment>
<gene>
    <name evidence="6" type="primary">elxA</name>
</gene>